<evidence type="ECO:0000255" key="1"/>
<evidence type="ECO:0000269" key="2">
    <source>
    </source>
</evidence>
<evidence type="ECO:0000305" key="3"/>
<sequence length="245" mass="27563">MASPSRRLQTKPVITCFKSVLLIYTFIFWITGVILLAVGIWGKVSLENYFSLLNEKATNVPFVLIATGTVIILLGTFGCFATCRASAWMLKLYAMFLTLVFLVELVAAIVGFVFRHEIKNSFKNNYEKALKQYNSTGDYRSHAVDKIQNTLHCCGVTDYRDWTDTNYYSEKGFPKSCCKLEDCTPQRDADKVNNEGCFIKVMTIIESEMGVVAGISFGVACFQLIGIFLAYCLSRAITNNQYEIV</sequence>
<protein>
    <recommendedName>
        <fullName>Tetraspanin-6</fullName>
        <shortName>Tspan-6</shortName>
    </recommendedName>
    <alternativeName>
        <fullName>A15 homolog</fullName>
    </alternativeName>
    <alternativeName>
        <fullName>Putative NF-kappa-B-activating protein 321</fullName>
    </alternativeName>
    <alternativeName>
        <fullName>T245 protein</fullName>
    </alternativeName>
    <alternativeName>
        <fullName>Tetraspanin TM4-D</fullName>
    </alternativeName>
    <alternativeName>
        <fullName>Transmembrane 4 superfamily member 6</fullName>
    </alternativeName>
</protein>
<gene>
    <name type="primary">TSPAN6</name>
    <name type="synonym">TM4SF6</name>
    <name type="ORF">UNQ767/PRO1560</name>
</gene>
<dbReference type="EMBL" id="AF053453">
    <property type="protein sequence ID" value="AAC69710.1"/>
    <property type="molecule type" value="mRNA"/>
</dbReference>
<dbReference type="EMBL" id="AF043906">
    <property type="protein sequence ID" value="AAC64257.1"/>
    <property type="molecule type" value="mRNA"/>
</dbReference>
<dbReference type="EMBL" id="U84895">
    <property type="protein sequence ID" value="AAD00560.1"/>
    <property type="molecule type" value="mRNA"/>
</dbReference>
<dbReference type="EMBL" id="AF133426">
    <property type="protein sequence ID" value="AAF08365.1"/>
    <property type="molecule type" value="mRNA"/>
</dbReference>
<dbReference type="EMBL" id="AY358825">
    <property type="protein sequence ID" value="AAQ89184.1"/>
    <property type="molecule type" value="mRNA"/>
</dbReference>
<dbReference type="EMBL" id="AB097016">
    <property type="protein sequence ID" value="BAC77369.1"/>
    <property type="molecule type" value="mRNA"/>
</dbReference>
<dbReference type="EMBL" id="BT006977">
    <property type="protein sequence ID" value="AAP35623.1"/>
    <property type="molecule type" value="mRNA"/>
</dbReference>
<dbReference type="EMBL" id="CR457115">
    <property type="protein sequence ID" value="CAG33396.1"/>
    <property type="molecule type" value="mRNA"/>
</dbReference>
<dbReference type="EMBL" id="AL035608">
    <property type="status" value="NOT_ANNOTATED_CDS"/>
    <property type="molecule type" value="Genomic_DNA"/>
</dbReference>
<dbReference type="EMBL" id="CH471115">
    <property type="protein sequence ID" value="EAX02811.1"/>
    <property type="molecule type" value="Genomic_DNA"/>
</dbReference>
<dbReference type="EMBL" id="BC012389">
    <property type="protein sequence ID" value="AAH12389.1"/>
    <property type="molecule type" value="mRNA"/>
</dbReference>
<dbReference type="CCDS" id="CCDS14470.1"/>
<dbReference type="PIR" id="A59258">
    <property type="entry name" value="A59258"/>
</dbReference>
<dbReference type="RefSeq" id="NP_001265672.1">
    <property type="nucleotide sequence ID" value="NM_001278743.1"/>
</dbReference>
<dbReference type="RefSeq" id="NP_003261.1">
    <property type="nucleotide sequence ID" value="NM_003270.4"/>
</dbReference>
<dbReference type="SMR" id="O43657"/>
<dbReference type="BioGRID" id="112960">
    <property type="interactions" value="64"/>
</dbReference>
<dbReference type="FunCoup" id="O43657">
    <property type="interactions" value="359"/>
</dbReference>
<dbReference type="IntAct" id="O43657">
    <property type="interactions" value="56"/>
</dbReference>
<dbReference type="MINT" id="O43657"/>
<dbReference type="STRING" id="9606.ENSP00000362111"/>
<dbReference type="GlyCosmos" id="O43657">
    <property type="glycosylation" value="1 site, No reported glycans"/>
</dbReference>
<dbReference type="GlyGen" id="O43657">
    <property type="glycosylation" value="2 sites, 7 N-linked glycans (1 site), 1 O-linked glycan (1 site)"/>
</dbReference>
<dbReference type="iPTMnet" id="O43657"/>
<dbReference type="PhosphoSitePlus" id="O43657"/>
<dbReference type="SwissPalm" id="O43657"/>
<dbReference type="BioMuta" id="TSPAN6"/>
<dbReference type="CPTAC" id="CPTAC-1285"/>
<dbReference type="jPOST" id="O43657"/>
<dbReference type="MassIVE" id="O43657"/>
<dbReference type="PaxDb" id="9606-ENSP00000362111"/>
<dbReference type="PeptideAtlas" id="O43657"/>
<dbReference type="ProteomicsDB" id="49090"/>
<dbReference type="Pumba" id="O43657"/>
<dbReference type="Antibodypedia" id="478">
    <property type="antibodies" value="229 antibodies from 27 providers"/>
</dbReference>
<dbReference type="DNASU" id="7105"/>
<dbReference type="Ensembl" id="ENST00000373020.9">
    <property type="protein sequence ID" value="ENSP00000362111.4"/>
    <property type="gene ID" value="ENSG00000000003.16"/>
</dbReference>
<dbReference type="GeneID" id="7105"/>
<dbReference type="KEGG" id="hsa:7105"/>
<dbReference type="MANE-Select" id="ENST00000373020.9">
    <property type="protein sequence ID" value="ENSP00000362111.4"/>
    <property type="RefSeq nucleotide sequence ID" value="NM_003270.4"/>
    <property type="RefSeq protein sequence ID" value="NP_003261.1"/>
</dbReference>
<dbReference type="UCSC" id="uc004ega.3">
    <property type="organism name" value="human"/>
</dbReference>
<dbReference type="AGR" id="HGNC:11858"/>
<dbReference type="CTD" id="7105"/>
<dbReference type="DisGeNET" id="7105"/>
<dbReference type="GeneCards" id="TSPAN6"/>
<dbReference type="HGNC" id="HGNC:11858">
    <property type="gene designation" value="TSPAN6"/>
</dbReference>
<dbReference type="HPA" id="ENSG00000000003">
    <property type="expression patterns" value="Low tissue specificity"/>
</dbReference>
<dbReference type="MIM" id="300191">
    <property type="type" value="gene"/>
</dbReference>
<dbReference type="neXtProt" id="NX_O43657"/>
<dbReference type="OpenTargets" id="ENSG00000000003"/>
<dbReference type="PharmGKB" id="PA36559"/>
<dbReference type="VEuPathDB" id="HostDB:ENSG00000000003"/>
<dbReference type="eggNOG" id="KOG3882">
    <property type="taxonomic scope" value="Eukaryota"/>
</dbReference>
<dbReference type="GeneTree" id="ENSGT00940000159092"/>
<dbReference type="HOGENOM" id="CLU_055524_3_0_1"/>
<dbReference type="InParanoid" id="O43657"/>
<dbReference type="OMA" id="YRNWEDT"/>
<dbReference type="OrthoDB" id="9972904at2759"/>
<dbReference type="PAN-GO" id="O43657">
    <property type="GO annotations" value="1 GO annotation based on evolutionary models"/>
</dbReference>
<dbReference type="PhylomeDB" id="O43657"/>
<dbReference type="TreeFam" id="TF352891"/>
<dbReference type="PathwayCommons" id="O43657"/>
<dbReference type="SignaLink" id="O43657"/>
<dbReference type="BioGRID-ORCS" id="7105">
    <property type="hits" value="11 hits in 767 CRISPR screens"/>
</dbReference>
<dbReference type="ChiTaRS" id="TSPAN6">
    <property type="organism name" value="human"/>
</dbReference>
<dbReference type="GeneWiki" id="TSPAN6"/>
<dbReference type="GenomeRNAi" id="7105"/>
<dbReference type="Pharos" id="O43657">
    <property type="development level" value="Tbio"/>
</dbReference>
<dbReference type="PRO" id="PR:O43657"/>
<dbReference type="Proteomes" id="UP000005640">
    <property type="component" value="Chromosome X"/>
</dbReference>
<dbReference type="RNAct" id="O43657">
    <property type="molecule type" value="protein"/>
</dbReference>
<dbReference type="Bgee" id="ENSG00000000003">
    <property type="expression patterns" value="Expressed in sperm and 202 other cell types or tissues"/>
</dbReference>
<dbReference type="ExpressionAtlas" id="O43657">
    <property type="expression patterns" value="baseline and differential"/>
</dbReference>
<dbReference type="GO" id="GO:0070062">
    <property type="term" value="C:extracellular exosome"/>
    <property type="evidence" value="ECO:0007005"/>
    <property type="project" value="UniProtKB"/>
</dbReference>
<dbReference type="GO" id="GO:0005886">
    <property type="term" value="C:plasma membrane"/>
    <property type="evidence" value="ECO:0000318"/>
    <property type="project" value="GO_Central"/>
</dbReference>
<dbReference type="GO" id="GO:0043124">
    <property type="term" value="P:negative regulation of canonical NF-kappaB signal transduction"/>
    <property type="evidence" value="ECO:0000314"/>
    <property type="project" value="UniProtKB"/>
</dbReference>
<dbReference type="GO" id="GO:0039532">
    <property type="term" value="P:negative regulation of cytoplasmic pattern recognition receptor signaling pathway"/>
    <property type="evidence" value="ECO:0000315"/>
    <property type="project" value="UniProtKB"/>
</dbReference>
<dbReference type="GO" id="GO:0043123">
    <property type="term" value="P:positive regulation of canonical NF-kappaB signal transduction"/>
    <property type="evidence" value="ECO:0007001"/>
    <property type="project" value="UniProtKB"/>
</dbReference>
<dbReference type="CDD" id="cd03161">
    <property type="entry name" value="TM4SF2_6_like_LEL"/>
    <property type="match status" value="1"/>
</dbReference>
<dbReference type="FunFam" id="1.10.1450.10:FF:000013">
    <property type="entry name" value="Tetraspanin"/>
    <property type="match status" value="1"/>
</dbReference>
<dbReference type="Gene3D" id="1.10.1450.10">
    <property type="entry name" value="Tetraspanin"/>
    <property type="match status" value="1"/>
</dbReference>
<dbReference type="InterPro" id="IPR018499">
    <property type="entry name" value="Tetraspanin/Peripherin"/>
</dbReference>
<dbReference type="InterPro" id="IPR000301">
    <property type="entry name" value="Tetraspanin_animals"/>
</dbReference>
<dbReference type="InterPro" id="IPR018503">
    <property type="entry name" value="Tetraspanin_CS"/>
</dbReference>
<dbReference type="InterPro" id="IPR008952">
    <property type="entry name" value="Tetraspanin_EC2_sf"/>
</dbReference>
<dbReference type="InterPro" id="IPR048232">
    <property type="entry name" value="TSN6/7_LEL"/>
</dbReference>
<dbReference type="PANTHER" id="PTHR19282">
    <property type="entry name" value="TETRASPANIN"/>
    <property type="match status" value="1"/>
</dbReference>
<dbReference type="PANTHER" id="PTHR19282:SF169">
    <property type="entry name" value="TETRASPANIN-6"/>
    <property type="match status" value="1"/>
</dbReference>
<dbReference type="Pfam" id="PF00335">
    <property type="entry name" value="Tetraspanin"/>
    <property type="match status" value="1"/>
</dbReference>
<dbReference type="PIRSF" id="PIRSF002419">
    <property type="entry name" value="Tetraspanin"/>
    <property type="match status" value="1"/>
</dbReference>
<dbReference type="PRINTS" id="PR00259">
    <property type="entry name" value="TMFOUR"/>
</dbReference>
<dbReference type="SUPFAM" id="SSF48652">
    <property type="entry name" value="Tetraspanin"/>
    <property type="match status" value="1"/>
</dbReference>
<dbReference type="PROSITE" id="PS00421">
    <property type="entry name" value="TM4_1"/>
    <property type="match status" value="1"/>
</dbReference>
<keyword id="KW-0325">Glycoprotein</keyword>
<keyword id="KW-0472">Membrane</keyword>
<keyword id="KW-1267">Proteomics identification</keyword>
<keyword id="KW-1185">Reference proteome</keyword>
<keyword id="KW-0812">Transmembrane</keyword>
<keyword id="KW-1133">Transmembrane helix</keyword>
<accession>O43657</accession>
<accession>Q54A42</accession>
<accession>Q6IAN9</accession>
<feature type="chain" id="PRO_0000219246" description="Tetraspanin-6">
    <location>
        <begin position="1"/>
        <end position="245"/>
    </location>
</feature>
<feature type="topological domain" description="Cytoplasmic" evidence="1">
    <location>
        <begin position="1"/>
        <end position="19"/>
    </location>
</feature>
<feature type="transmembrane region" description="Helical" evidence="1">
    <location>
        <begin position="20"/>
        <end position="40"/>
    </location>
</feature>
<feature type="topological domain" description="Extracellular" evidence="1">
    <location>
        <begin position="41"/>
        <end position="59"/>
    </location>
</feature>
<feature type="transmembrane region" description="Helical" evidence="1">
    <location>
        <begin position="60"/>
        <end position="80"/>
    </location>
</feature>
<feature type="topological domain" description="Cytoplasmic" evidence="1">
    <location>
        <begin position="81"/>
        <end position="93"/>
    </location>
</feature>
<feature type="transmembrane region" description="Helical" evidence="1">
    <location>
        <begin position="94"/>
        <end position="114"/>
    </location>
</feature>
<feature type="topological domain" description="Extracellular" evidence="1">
    <location>
        <begin position="115"/>
        <end position="208"/>
    </location>
</feature>
<feature type="transmembrane region" description="Helical" evidence="1">
    <location>
        <begin position="209"/>
        <end position="229"/>
    </location>
</feature>
<feature type="topological domain" description="Cytoplasmic" evidence="1">
    <location>
        <begin position="230"/>
        <end position="245"/>
    </location>
</feature>
<feature type="glycosylation site" description="N-linked (GlcNAc...) asparagine" evidence="1">
    <location>
        <position position="134"/>
    </location>
</feature>
<feature type="sequence variant" id="VAR_014494" description="In dbSNP:rs1802288." evidence="2">
    <original>A</original>
    <variation>T</variation>
    <location>
        <position position="108"/>
    </location>
</feature>
<proteinExistence type="evidence at protein level"/>
<organism>
    <name type="scientific">Homo sapiens</name>
    <name type="common">Human</name>
    <dbReference type="NCBI Taxonomy" id="9606"/>
    <lineage>
        <taxon>Eukaryota</taxon>
        <taxon>Metazoa</taxon>
        <taxon>Chordata</taxon>
        <taxon>Craniata</taxon>
        <taxon>Vertebrata</taxon>
        <taxon>Euteleostomi</taxon>
        <taxon>Mammalia</taxon>
        <taxon>Eutheria</taxon>
        <taxon>Euarchontoglires</taxon>
        <taxon>Primates</taxon>
        <taxon>Haplorrhini</taxon>
        <taxon>Catarrhini</taxon>
        <taxon>Hominidae</taxon>
        <taxon>Homo</taxon>
    </lineage>
</organism>
<name>TSN6_HUMAN</name>
<reference key="1">
    <citation type="journal article" date="1998" name="Biochim. Biophys. Acta">
        <title>Sequences and expression of six new members of the tetraspanin/TM4SF family.</title>
        <authorList>
            <person name="Todd S.C."/>
            <person name="Doctor V.S."/>
            <person name="Levy S."/>
        </authorList>
    </citation>
    <scope>NUCLEOTIDE SEQUENCE [MRNA]</scope>
</reference>
<reference key="2">
    <citation type="journal article" date="1998" name="Genomics">
        <title>Cloning and characterization of a novel human gene, TM4SF6, encoding a protein belonging to the transmembrane 4 superfamily, and mapped to Xq22.</title>
        <authorList>
            <person name="Maeda K."/>
            <person name="Matsuhashi S."/>
            <person name="Hori K."/>
            <person name="Xin Z."/>
            <person name="Mukai T."/>
            <person name="Tabuchi K."/>
            <person name="Egashira M."/>
            <person name="Niikawa N."/>
        </authorList>
    </citation>
    <scope>NUCLEOTIDE SEQUENCE [MRNA]</scope>
</reference>
<reference key="3">
    <citation type="submission" date="1997-01" db="EMBL/GenBank/DDBJ databases">
        <title>The cDNA cloning of a novel gene A15 homologue which encodes a new member of the transmembrane 4 superfamily.</title>
        <authorList>
            <person name="Maeda K."/>
            <person name="Matsuhashi Y."/>
        </authorList>
    </citation>
    <scope>NUCLEOTIDE SEQUENCE [MRNA]</scope>
</reference>
<reference key="4">
    <citation type="submission" date="1999-03" db="EMBL/GenBank/DDBJ databases">
        <title>The molecular characterization of four tetraspanins.</title>
        <authorList>
            <person name="Puls K.L."/>
            <person name="Ni J."/>
            <person name="Liu D."/>
            <person name="Morahan G."/>
            <person name="Wright M.D."/>
        </authorList>
    </citation>
    <scope>NUCLEOTIDE SEQUENCE [MRNA]</scope>
</reference>
<reference key="5">
    <citation type="journal article" date="2003" name="Genome Res.">
        <title>The secreted protein discovery initiative (SPDI), a large-scale effort to identify novel human secreted and transmembrane proteins: a bioinformatics assessment.</title>
        <authorList>
            <person name="Clark H.F."/>
            <person name="Gurney A.L."/>
            <person name="Abaya E."/>
            <person name="Baker K."/>
            <person name="Baldwin D.T."/>
            <person name="Brush J."/>
            <person name="Chen J."/>
            <person name="Chow B."/>
            <person name="Chui C."/>
            <person name="Crowley C."/>
            <person name="Currell B."/>
            <person name="Deuel B."/>
            <person name="Dowd P."/>
            <person name="Eaton D."/>
            <person name="Foster J.S."/>
            <person name="Grimaldi C."/>
            <person name="Gu Q."/>
            <person name="Hass P.E."/>
            <person name="Heldens S."/>
            <person name="Huang A."/>
            <person name="Kim H.S."/>
            <person name="Klimowski L."/>
            <person name="Jin Y."/>
            <person name="Johnson S."/>
            <person name="Lee J."/>
            <person name="Lewis L."/>
            <person name="Liao D."/>
            <person name="Mark M.R."/>
            <person name="Robbie E."/>
            <person name="Sanchez C."/>
            <person name="Schoenfeld J."/>
            <person name="Seshagiri S."/>
            <person name="Simmons L."/>
            <person name="Singh J."/>
            <person name="Smith V."/>
            <person name="Stinson J."/>
            <person name="Vagts A."/>
            <person name="Vandlen R.L."/>
            <person name="Watanabe C."/>
            <person name="Wieand D."/>
            <person name="Woods K."/>
            <person name="Xie M.-H."/>
            <person name="Yansura D.G."/>
            <person name="Yi S."/>
            <person name="Yu G."/>
            <person name="Yuan J."/>
            <person name="Zhang M."/>
            <person name="Zhang Z."/>
            <person name="Goddard A.D."/>
            <person name="Wood W.I."/>
            <person name="Godowski P.J."/>
            <person name="Gray A.M."/>
        </authorList>
    </citation>
    <scope>NUCLEOTIDE SEQUENCE [LARGE SCALE MRNA]</scope>
</reference>
<reference key="6">
    <citation type="journal article" date="2003" name="Oncogene">
        <title>Large-scale identification and characterization of human genes that activate NF-kappaB and MAPK signaling pathways.</title>
        <authorList>
            <person name="Matsuda A."/>
            <person name="Suzuki Y."/>
            <person name="Honda G."/>
            <person name="Muramatsu S."/>
            <person name="Matsuzaki O."/>
            <person name="Nagano Y."/>
            <person name="Doi T."/>
            <person name="Shimotohno K."/>
            <person name="Harada T."/>
            <person name="Nishida E."/>
            <person name="Hayashi H."/>
            <person name="Sugano S."/>
        </authorList>
    </citation>
    <scope>NUCLEOTIDE SEQUENCE [LARGE SCALE MRNA]</scope>
    <scope>VARIANT THR-108</scope>
    <source>
        <tissue>Lung</tissue>
    </source>
</reference>
<reference key="7">
    <citation type="submission" date="2004-10" db="EMBL/GenBank/DDBJ databases">
        <title>Cloning of human full-length CDSs in BD Creator(TM) system donor vector.</title>
        <authorList>
            <person name="Kalnine N."/>
            <person name="Chen X."/>
            <person name="Rolfs A."/>
            <person name="Halleck A."/>
            <person name="Hines L."/>
            <person name="Eisenstein S."/>
            <person name="Koundinya M."/>
            <person name="Raphael J."/>
            <person name="Moreira D."/>
            <person name="Kelley T."/>
            <person name="LaBaer J."/>
            <person name="Lin Y."/>
            <person name="Phelan M."/>
            <person name="Farmer A."/>
        </authorList>
    </citation>
    <scope>NUCLEOTIDE SEQUENCE [LARGE SCALE MRNA]</scope>
</reference>
<reference key="8">
    <citation type="submission" date="2004-06" db="EMBL/GenBank/DDBJ databases">
        <title>Cloning of human full open reading frames in Gateway(TM) system entry vector (pDONR201).</title>
        <authorList>
            <person name="Ebert L."/>
            <person name="Schick M."/>
            <person name="Neubert P."/>
            <person name="Schatten R."/>
            <person name="Henze S."/>
            <person name="Korn B."/>
        </authorList>
    </citation>
    <scope>NUCLEOTIDE SEQUENCE [LARGE SCALE MRNA]</scope>
</reference>
<reference key="9">
    <citation type="journal article" date="2005" name="Nature">
        <title>The DNA sequence of the human X chromosome.</title>
        <authorList>
            <person name="Ross M.T."/>
            <person name="Grafham D.V."/>
            <person name="Coffey A.J."/>
            <person name="Scherer S."/>
            <person name="McLay K."/>
            <person name="Muzny D."/>
            <person name="Platzer M."/>
            <person name="Howell G.R."/>
            <person name="Burrows C."/>
            <person name="Bird C.P."/>
            <person name="Frankish A."/>
            <person name="Lovell F.L."/>
            <person name="Howe K.L."/>
            <person name="Ashurst J.L."/>
            <person name="Fulton R.S."/>
            <person name="Sudbrak R."/>
            <person name="Wen G."/>
            <person name="Jones M.C."/>
            <person name="Hurles M.E."/>
            <person name="Andrews T.D."/>
            <person name="Scott C.E."/>
            <person name="Searle S."/>
            <person name="Ramser J."/>
            <person name="Whittaker A."/>
            <person name="Deadman R."/>
            <person name="Carter N.P."/>
            <person name="Hunt S.E."/>
            <person name="Chen R."/>
            <person name="Cree A."/>
            <person name="Gunaratne P."/>
            <person name="Havlak P."/>
            <person name="Hodgson A."/>
            <person name="Metzker M.L."/>
            <person name="Richards S."/>
            <person name="Scott G."/>
            <person name="Steffen D."/>
            <person name="Sodergren E."/>
            <person name="Wheeler D.A."/>
            <person name="Worley K.C."/>
            <person name="Ainscough R."/>
            <person name="Ambrose K.D."/>
            <person name="Ansari-Lari M.A."/>
            <person name="Aradhya S."/>
            <person name="Ashwell R.I."/>
            <person name="Babbage A.K."/>
            <person name="Bagguley C.L."/>
            <person name="Ballabio A."/>
            <person name="Banerjee R."/>
            <person name="Barker G.E."/>
            <person name="Barlow K.F."/>
            <person name="Barrett I.P."/>
            <person name="Bates K.N."/>
            <person name="Beare D.M."/>
            <person name="Beasley H."/>
            <person name="Beasley O."/>
            <person name="Beck A."/>
            <person name="Bethel G."/>
            <person name="Blechschmidt K."/>
            <person name="Brady N."/>
            <person name="Bray-Allen S."/>
            <person name="Bridgeman A.M."/>
            <person name="Brown A.J."/>
            <person name="Brown M.J."/>
            <person name="Bonnin D."/>
            <person name="Bruford E.A."/>
            <person name="Buhay C."/>
            <person name="Burch P."/>
            <person name="Burford D."/>
            <person name="Burgess J."/>
            <person name="Burrill W."/>
            <person name="Burton J."/>
            <person name="Bye J.M."/>
            <person name="Carder C."/>
            <person name="Carrel L."/>
            <person name="Chako J."/>
            <person name="Chapman J.C."/>
            <person name="Chavez D."/>
            <person name="Chen E."/>
            <person name="Chen G."/>
            <person name="Chen Y."/>
            <person name="Chen Z."/>
            <person name="Chinault C."/>
            <person name="Ciccodicola A."/>
            <person name="Clark S.Y."/>
            <person name="Clarke G."/>
            <person name="Clee C.M."/>
            <person name="Clegg S."/>
            <person name="Clerc-Blankenburg K."/>
            <person name="Clifford K."/>
            <person name="Cobley V."/>
            <person name="Cole C.G."/>
            <person name="Conquer J.S."/>
            <person name="Corby N."/>
            <person name="Connor R.E."/>
            <person name="David R."/>
            <person name="Davies J."/>
            <person name="Davis C."/>
            <person name="Davis J."/>
            <person name="Delgado O."/>
            <person name="Deshazo D."/>
            <person name="Dhami P."/>
            <person name="Ding Y."/>
            <person name="Dinh H."/>
            <person name="Dodsworth S."/>
            <person name="Draper H."/>
            <person name="Dugan-Rocha S."/>
            <person name="Dunham A."/>
            <person name="Dunn M."/>
            <person name="Durbin K.J."/>
            <person name="Dutta I."/>
            <person name="Eades T."/>
            <person name="Ellwood M."/>
            <person name="Emery-Cohen A."/>
            <person name="Errington H."/>
            <person name="Evans K.L."/>
            <person name="Faulkner L."/>
            <person name="Francis F."/>
            <person name="Frankland J."/>
            <person name="Fraser A.E."/>
            <person name="Galgoczy P."/>
            <person name="Gilbert J."/>
            <person name="Gill R."/>
            <person name="Gloeckner G."/>
            <person name="Gregory S.G."/>
            <person name="Gribble S."/>
            <person name="Griffiths C."/>
            <person name="Grocock R."/>
            <person name="Gu Y."/>
            <person name="Gwilliam R."/>
            <person name="Hamilton C."/>
            <person name="Hart E.A."/>
            <person name="Hawes A."/>
            <person name="Heath P.D."/>
            <person name="Heitmann K."/>
            <person name="Hennig S."/>
            <person name="Hernandez J."/>
            <person name="Hinzmann B."/>
            <person name="Ho S."/>
            <person name="Hoffs M."/>
            <person name="Howden P.J."/>
            <person name="Huckle E.J."/>
            <person name="Hume J."/>
            <person name="Hunt P.J."/>
            <person name="Hunt A.R."/>
            <person name="Isherwood J."/>
            <person name="Jacob L."/>
            <person name="Johnson D."/>
            <person name="Jones S."/>
            <person name="de Jong P.J."/>
            <person name="Joseph S.S."/>
            <person name="Keenan S."/>
            <person name="Kelly S."/>
            <person name="Kershaw J.K."/>
            <person name="Khan Z."/>
            <person name="Kioschis P."/>
            <person name="Klages S."/>
            <person name="Knights A.J."/>
            <person name="Kosiura A."/>
            <person name="Kovar-Smith C."/>
            <person name="Laird G.K."/>
            <person name="Langford C."/>
            <person name="Lawlor S."/>
            <person name="Leversha M."/>
            <person name="Lewis L."/>
            <person name="Liu W."/>
            <person name="Lloyd C."/>
            <person name="Lloyd D.M."/>
            <person name="Loulseged H."/>
            <person name="Loveland J.E."/>
            <person name="Lovell J.D."/>
            <person name="Lozado R."/>
            <person name="Lu J."/>
            <person name="Lyne R."/>
            <person name="Ma J."/>
            <person name="Maheshwari M."/>
            <person name="Matthews L.H."/>
            <person name="McDowall J."/>
            <person name="McLaren S."/>
            <person name="McMurray A."/>
            <person name="Meidl P."/>
            <person name="Meitinger T."/>
            <person name="Milne S."/>
            <person name="Miner G."/>
            <person name="Mistry S.L."/>
            <person name="Morgan M."/>
            <person name="Morris S."/>
            <person name="Mueller I."/>
            <person name="Mullikin J.C."/>
            <person name="Nguyen N."/>
            <person name="Nordsiek G."/>
            <person name="Nyakatura G."/>
            <person name="O'dell C.N."/>
            <person name="Okwuonu G."/>
            <person name="Palmer S."/>
            <person name="Pandian R."/>
            <person name="Parker D."/>
            <person name="Parrish J."/>
            <person name="Pasternak S."/>
            <person name="Patel D."/>
            <person name="Pearce A.V."/>
            <person name="Pearson D.M."/>
            <person name="Pelan S.E."/>
            <person name="Perez L."/>
            <person name="Porter K.M."/>
            <person name="Ramsey Y."/>
            <person name="Reichwald K."/>
            <person name="Rhodes S."/>
            <person name="Ridler K.A."/>
            <person name="Schlessinger D."/>
            <person name="Schueler M.G."/>
            <person name="Sehra H.K."/>
            <person name="Shaw-Smith C."/>
            <person name="Shen H."/>
            <person name="Sheridan E.M."/>
            <person name="Shownkeen R."/>
            <person name="Skuce C.D."/>
            <person name="Smith M.L."/>
            <person name="Sotheran E.C."/>
            <person name="Steingruber H.E."/>
            <person name="Steward C.A."/>
            <person name="Storey R."/>
            <person name="Swann R.M."/>
            <person name="Swarbreck D."/>
            <person name="Tabor P.E."/>
            <person name="Taudien S."/>
            <person name="Taylor T."/>
            <person name="Teague B."/>
            <person name="Thomas K."/>
            <person name="Thorpe A."/>
            <person name="Timms K."/>
            <person name="Tracey A."/>
            <person name="Trevanion S."/>
            <person name="Tromans A.C."/>
            <person name="d'Urso M."/>
            <person name="Verduzco D."/>
            <person name="Villasana D."/>
            <person name="Waldron L."/>
            <person name="Wall M."/>
            <person name="Wang Q."/>
            <person name="Warren J."/>
            <person name="Warry G.L."/>
            <person name="Wei X."/>
            <person name="West A."/>
            <person name="Whitehead S.L."/>
            <person name="Whiteley M.N."/>
            <person name="Wilkinson J.E."/>
            <person name="Willey D.L."/>
            <person name="Williams G."/>
            <person name="Williams L."/>
            <person name="Williamson A."/>
            <person name="Williamson H."/>
            <person name="Wilming L."/>
            <person name="Woodmansey R.L."/>
            <person name="Wray P.W."/>
            <person name="Yen J."/>
            <person name="Zhang J."/>
            <person name="Zhou J."/>
            <person name="Zoghbi H."/>
            <person name="Zorilla S."/>
            <person name="Buck D."/>
            <person name="Reinhardt R."/>
            <person name="Poustka A."/>
            <person name="Rosenthal A."/>
            <person name="Lehrach H."/>
            <person name="Meindl A."/>
            <person name="Minx P.J."/>
            <person name="Hillier L.W."/>
            <person name="Willard H.F."/>
            <person name="Wilson R.K."/>
            <person name="Waterston R.H."/>
            <person name="Rice C.M."/>
            <person name="Vaudin M."/>
            <person name="Coulson A."/>
            <person name="Nelson D.L."/>
            <person name="Weinstock G."/>
            <person name="Sulston J.E."/>
            <person name="Durbin R.M."/>
            <person name="Hubbard T."/>
            <person name="Gibbs R.A."/>
            <person name="Beck S."/>
            <person name="Rogers J."/>
            <person name="Bentley D.R."/>
        </authorList>
    </citation>
    <scope>NUCLEOTIDE SEQUENCE [LARGE SCALE GENOMIC DNA]</scope>
</reference>
<reference key="10">
    <citation type="submission" date="2005-07" db="EMBL/GenBank/DDBJ databases">
        <authorList>
            <person name="Mural R.J."/>
            <person name="Istrail S."/>
            <person name="Sutton G.G."/>
            <person name="Florea L."/>
            <person name="Halpern A.L."/>
            <person name="Mobarry C.M."/>
            <person name="Lippert R."/>
            <person name="Walenz B."/>
            <person name="Shatkay H."/>
            <person name="Dew I."/>
            <person name="Miller J.R."/>
            <person name="Flanigan M.J."/>
            <person name="Edwards N.J."/>
            <person name="Bolanos R."/>
            <person name="Fasulo D."/>
            <person name="Halldorsson B.V."/>
            <person name="Hannenhalli S."/>
            <person name="Turner R."/>
            <person name="Yooseph S."/>
            <person name="Lu F."/>
            <person name="Nusskern D.R."/>
            <person name="Shue B.C."/>
            <person name="Zheng X.H."/>
            <person name="Zhong F."/>
            <person name="Delcher A.L."/>
            <person name="Huson D.H."/>
            <person name="Kravitz S.A."/>
            <person name="Mouchard L."/>
            <person name="Reinert K."/>
            <person name="Remington K.A."/>
            <person name="Clark A.G."/>
            <person name="Waterman M.S."/>
            <person name="Eichler E.E."/>
            <person name="Adams M.D."/>
            <person name="Hunkapiller M.W."/>
            <person name="Myers E.W."/>
            <person name="Venter J.C."/>
        </authorList>
    </citation>
    <scope>NUCLEOTIDE SEQUENCE [LARGE SCALE GENOMIC DNA]</scope>
</reference>
<reference key="11">
    <citation type="journal article" date="2004" name="Genome Res.">
        <title>The status, quality, and expansion of the NIH full-length cDNA project: the Mammalian Gene Collection (MGC).</title>
        <authorList>
            <consortium name="The MGC Project Team"/>
        </authorList>
    </citation>
    <scope>NUCLEOTIDE SEQUENCE [LARGE SCALE MRNA]</scope>
    <source>
        <tissue>Ovary</tissue>
    </source>
</reference>
<reference key="12">
    <citation type="journal article" date="2011" name="BMC Syst. Biol.">
        <title>Initial characterization of the human central proteome.</title>
        <authorList>
            <person name="Burkard T.R."/>
            <person name="Planyavsky M."/>
            <person name="Kaupe I."/>
            <person name="Breitwieser F.P."/>
            <person name="Buerckstuemmer T."/>
            <person name="Bennett K.L."/>
            <person name="Superti-Furga G."/>
            <person name="Colinge J."/>
        </authorList>
    </citation>
    <scope>IDENTIFICATION BY MASS SPECTROMETRY [LARGE SCALE ANALYSIS]</scope>
</reference>
<comment type="subcellular location">
    <subcellularLocation>
        <location>Membrane</location>
        <topology>Multi-pass membrane protein</topology>
    </subcellularLocation>
</comment>
<comment type="similarity">
    <text evidence="3">Belongs to the tetraspanin (TM4SF) family.</text>
</comment>